<proteinExistence type="inferred from homology"/>
<organism>
    <name type="scientific">Clostridium perfringens (strain 13 / Type A)</name>
    <dbReference type="NCBI Taxonomy" id="195102"/>
    <lineage>
        <taxon>Bacteria</taxon>
        <taxon>Bacillati</taxon>
        <taxon>Bacillota</taxon>
        <taxon>Clostridia</taxon>
        <taxon>Eubacteriales</taxon>
        <taxon>Clostridiaceae</taxon>
        <taxon>Clostridium</taxon>
    </lineage>
</organism>
<protein>
    <recommendedName>
        <fullName>UPF0045 protein CPE1503</fullName>
    </recommendedName>
</protein>
<sequence>MDTCNVSLQILPSVEDSRLYEVVDKVIEYIESTGVKFEVGPMETTMEGKIDDLLEIVKKSQEICIEEGAGRVISIVKIDYKKGGVTMDEKVGKYR</sequence>
<name>Y1503_CLOPE</name>
<comment type="similarity">
    <text evidence="1">Belongs to the UPF0045 family.</text>
</comment>
<gene>
    <name type="ordered locus">CPE1503</name>
</gene>
<reference key="1">
    <citation type="journal article" date="1994" name="Mol. Microbiol.">
        <title>Identification and molecular analysis of a locus that regulates extracellular toxin production in Clostridium perfringens.</title>
        <authorList>
            <person name="Lyristis M."/>
            <person name="Bryant A.E."/>
            <person name="Sloan J."/>
            <person name="Awad M.M."/>
            <person name="Nisbet I.T."/>
            <person name="Stevens D.L."/>
            <person name="Rood J.I."/>
        </authorList>
    </citation>
    <scope>NUCLEOTIDE SEQUENCE [GENOMIC DNA]</scope>
    <source>
        <strain>JIR4025</strain>
    </source>
</reference>
<reference key="2">
    <citation type="journal article" date="2002" name="Proc. Natl. Acad. Sci. U.S.A.">
        <title>Complete genome sequence of Clostridium perfringens, an anaerobic flesh-eater.</title>
        <authorList>
            <person name="Shimizu T."/>
            <person name="Ohtani K."/>
            <person name="Hirakawa H."/>
            <person name="Ohshima K."/>
            <person name="Yamashita A."/>
            <person name="Shiba T."/>
            <person name="Ogasawara N."/>
            <person name="Hattori M."/>
            <person name="Kuhara S."/>
            <person name="Hayashi H."/>
        </authorList>
    </citation>
    <scope>NUCLEOTIDE SEQUENCE [LARGE SCALE GENOMIC DNA]</scope>
    <source>
        <strain>13 / Type A</strain>
    </source>
</reference>
<evidence type="ECO:0000305" key="1"/>
<dbReference type="EMBL" id="U04966">
    <property type="protein sequence ID" value="AAA58947.1"/>
    <property type="molecule type" value="Genomic_DNA"/>
</dbReference>
<dbReference type="EMBL" id="BA000016">
    <property type="protein sequence ID" value="BAB81209.1"/>
    <property type="molecule type" value="Genomic_DNA"/>
</dbReference>
<dbReference type="PIR" id="S49553">
    <property type="entry name" value="S49553"/>
</dbReference>
<dbReference type="RefSeq" id="WP_003455890.1">
    <property type="nucleotide sequence ID" value="NC_003366.1"/>
</dbReference>
<dbReference type="SMR" id="Q46213"/>
<dbReference type="STRING" id="195102.gene:10490767"/>
<dbReference type="KEGG" id="cpe:CPE1503"/>
<dbReference type="HOGENOM" id="CLU_137479_2_0_9"/>
<dbReference type="Proteomes" id="UP000000818">
    <property type="component" value="Chromosome"/>
</dbReference>
<dbReference type="GO" id="GO:0005829">
    <property type="term" value="C:cytosol"/>
    <property type="evidence" value="ECO:0007669"/>
    <property type="project" value="TreeGrafter"/>
</dbReference>
<dbReference type="Gene3D" id="3.30.70.930">
    <property type="match status" value="1"/>
</dbReference>
<dbReference type="InterPro" id="IPR029756">
    <property type="entry name" value="MTH1187/YkoF-like"/>
</dbReference>
<dbReference type="InterPro" id="IPR002767">
    <property type="entry name" value="Thiamine_BP"/>
</dbReference>
<dbReference type="InterPro" id="IPR051614">
    <property type="entry name" value="UPF0045_domain"/>
</dbReference>
<dbReference type="PANTHER" id="PTHR33777">
    <property type="entry name" value="UPF0045 PROTEIN ECM15"/>
    <property type="match status" value="1"/>
</dbReference>
<dbReference type="PANTHER" id="PTHR33777:SF1">
    <property type="entry name" value="UPF0045 PROTEIN ECM15"/>
    <property type="match status" value="1"/>
</dbReference>
<dbReference type="Pfam" id="PF01910">
    <property type="entry name" value="Thiamine_BP"/>
    <property type="match status" value="1"/>
</dbReference>
<dbReference type="SUPFAM" id="SSF89957">
    <property type="entry name" value="MTH1187/YkoF-like"/>
    <property type="match status" value="1"/>
</dbReference>
<accession>Q46213</accession>
<keyword id="KW-1185">Reference proteome</keyword>
<feature type="chain" id="PRO_0000147626" description="UPF0045 protein CPE1503">
    <location>
        <begin position="1"/>
        <end position="95"/>
    </location>
</feature>